<name>HTPG_HYDCU</name>
<keyword id="KW-0067">ATP-binding</keyword>
<keyword id="KW-0143">Chaperone</keyword>
<keyword id="KW-0963">Cytoplasm</keyword>
<keyword id="KW-0547">Nucleotide-binding</keyword>
<keyword id="KW-0346">Stress response</keyword>
<evidence type="ECO:0000255" key="1">
    <source>
        <dbReference type="HAMAP-Rule" id="MF_00505"/>
    </source>
</evidence>
<organism>
    <name type="scientific">Hydrogenovibrio crunogenus (strain DSM 25203 / XCL-2)</name>
    <name type="common">Thiomicrospira crunogena</name>
    <dbReference type="NCBI Taxonomy" id="317025"/>
    <lineage>
        <taxon>Bacteria</taxon>
        <taxon>Pseudomonadati</taxon>
        <taxon>Pseudomonadota</taxon>
        <taxon>Gammaproteobacteria</taxon>
        <taxon>Thiotrichales</taxon>
        <taxon>Piscirickettsiaceae</taxon>
        <taxon>Hydrogenovibrio</taxon>
    </lineage>
</organism>
<reference key="1">
    <citation type="journal article" date="2006" name="PLoS Biol.">
        <title>The genome of deep-sea vent chemolithoautotroph Thiomicrospira crunogena XCL-2.</title>
        <authorList>
            <person name="Scott K.M."/>
            <person name="Sievert S.M."/>
            <person name="Abril F.N."/>
            <person name="Ball L.A."/>
            <person name="Barrett C.J."/>
            <person name="Blake R.A."/>
            <person name="Boller A.J."/>
            <person name="Chain P.S.G."/>
            <person name="Clark J.A."/>
            <person name="Davis C.R."/>
            <person name="Detter C."/>
            <person name="Do K.F."/>
            <person name="Dobrinski K.P."/>
            <person name="Faza B.I."/>
            <person name="Fitzpatrick K.A."/>
            <person name="Freyermuth S.K."/>
            <person name="Harmer T.L."/>
            <person name="Hauser L.J."/>
            <person name="Huegler M."/>
            <person name="Kerfeld C.A."/>
            <person name="Klotz M.G."/>
            <person name="Kong W.W."/>
            <person name="Land M."/>
            <person name="Lapidus A."/>
            <person name="Larimer F.W."/>
            <person name="Longo D.L."/>
            <person name="Lucas S."/>
            <person name="Malfatti S.A."/>
            <person name="Massey S.E."/>
            <person name="Martin D.D."/>
            <person name="McCuddin Z."/>
            <person name="Meyer F."/>
            <person name="Moore J.L."/>
            <person name="Ocampo L.H. Jr."/>
            <person name="Paul J.H."/>
            <person name="Paulsen I.T."/>
            <person name="Reep D.K."/>
            <person name="Ren Q."/>
            <person name="Ross R.L."/>
            <person name="Sato P.Y."/>
            <person name="Thomas P."/>
            <person name="Tinkham L.E."/>
            <person name="Zeruth G.T."/>
        </authorList>
    </citation>
    <scope>NUCLEOTIDE SEQUENCE [LARGE SCALE GENOMIC DNA]</scope>
    <source>
        <strain>DSM 25203 / XCL-2</strain>
    </source>
</reference>
<dbReference type="EMBL" id="CP000109">
    <property type="protein sequence ID" value="ABB42201.1"/>
    <property type="molecule type" value="Genomic_DNA"/>
</dbReference>
<dbReference type="SMR" id="Q31F72"/>
<dbReference type="STRING" id="317025.Tcr_1609"/>
<dbReference type="KEGG" id="tcx:Tcr_1609"/>
<dbReference type="eggNOG" id="COG0326">
    <property type="taxonomic scope" value="Bacteria"/>
</dbReference>
<dbReference type="HOGENOM" id="CLU_006684_3_0_6"/>
<dbReference type="OrthoDB" id="9802640at2"/>
<dbReference type="GO" id="GO:0005737">
    <property type="term" value="C:cytoplasm"/>
    <property type="evidence" value="ECO:0007669"/>
    <property type="project" value="UniProtKB-SubCell"/>
</dbReference>
<dbReference type="GO" id="GO:0005524">
    <property type="term" value="F:ATP binding"/>
    <property type="evidence" value="ECO:0007669"/>
    <property type="project" value="UniProtKB-UniRule"/>
</dbReference>
<dbReference type="GO" id="GO:0016887">
    <property type="term" value="F:ATP hydrolysis activity"/>
    <property type="evidence" value="ECO:0007669"/>
    <property type="project" value="InterPro"/>
</dbReference>
<dbReference type="GO" id="GO:0140662">
    <property type="term" value="F:ATP-dependent protein folding chaperone"/>
    <property type="evidence" value="ECO:0007669"/>
    <property type="project" value="InterPro"/>
</dbReference>
<dbReference type="GO" id="GO:0051082">
    <property type="term" value="F:unfolded protein binding"/>
    <property type="evidence" value="ECO:0007669"/>
    <property type="project" value="UniProtKB-UniRule"/>
</dbReference>
<dbReference type="CDD" id="cd16927">
    <property type="entry name" value="HATPase_Hsp90-like"/>
    <property type="match status" value="1"/>
</dbReference>
<dbReference type="FunFam" id="3.30.230.80:FF:000002">
    <property type="entry name" value="Molecular chaperone HtpG"/>
    <property type="match status" value="1"/>
</dbReference>
<dbReference type="FunFam" id="3.30.565.10:FF:000009">
    <property type="entry name" value="Molecular chaperone HtpG"/>
    <property type="match status" value="1"/>
</dbReference>
<dbReference type="Gene3D" id="3.30.230.80">
    <property type="match status" value="1"/>
</dbReference>
<dbReference type="Gene3D" id="3.40.50.11260">
    <property type="match status" value="1"/>
</dbReference>
<dbReference type="Gene3D" id="1.20.120.790">
    <property type="entry name" value="Heat shock protein 90, C-terminal domain"/>
    <property type="match status" value="1"/>
</dbReference>
<dbReference type="Gene3D" id="3.30.565.10">
    <property type="entry name" value="Histidine kinase-like ATPase, C-terminal domain"/>
    <property type="match status" value="1"/>
</dbReference>
<dbReference type="HAMAP" id="MF_00505">
    <property type="entry name" value="HSP90"/>
    <property type="match status" value="1"/>
</dbReference>
<dbReference type="InterPro" id="IPR036890">
    <property type="entry name" value="HATPase_C_sf"/>
</dbReference>
<dbReference type="InterPro" id="IPR019805">
    <property type="entry name" value="Heat_shock_protein_90_CS"/>
</dbReference>
<dbReference type="InterPro" id="IPR037196">
    <property type="entry name" value="HSP90_C"/>
</dbReference>
<dbReference type="InterPro" id="IPR001404">
    <property type="entry name" value="Hsp90_fam"/>
</dbReference>
<dbReference type="InterPro" id="IPR020575">
    <property type="entry name" value="Hsp90_N"/>
</dbReference>
<dbReference type="InterPro" id="IPR020568">
    <property type="entry name" value="Ribosomal_Su5_D2-typ_SF"/>
</dbReference>
<dbReference type="NCBIfam" id="NF003555">
    <property type="entry name" value="PRK05218.1"/>
    <property type="match status" value="1"/>
</dbReference>
<dbReference type="PANTHER" id="PTHR11528">
    <property type="entry name" value="HEAT SHOCK PROTEIN 90 FAMILY MEMBER"/>
    <property type="match status" value="1"/>
</dbReference>
<dbReference type="Pfam" id="PF13589">
    <property type="entry name" value="HATPase_c_3"/>
    <property type="match status" value="1"/>
</dbReference>
<dbReference type="Pfam" id="PF00183">
    <property type="entry name" value="HSP90"/>
    <property type="match status" value="1"/>
</dbReference>
<dbReference type="PIRSF" id="PIRSF002583">
    <property type="entry name" value="Hsp90"/>
    <property type="match status" value="1"/>
</dbReference>
<dbReference type="PRINTS" id="PR00775">
    <property type="entry name" value="HEATSHOCK90"/>
</dbReference>
<dbReference type="SMART" id="SM00387">
    <property type="entry name" value="HATPase_c"/>
    <property type="match status" value="1"/>
</dbReference>
<dbReference type="SUPFAM" id="SSF55874">
    <property type="entry name" value="ATPase domain of HSP90 chaperone/DNA topoisomerase II/histidine kinase"/>
    <property type="match status" value="1"/>
</dbReference>
<dbReference type="SUPFAM" id="SSF110942">
    <property type="entry name" value="HSP90 C-terminal domain"/>
    <property type="match status" value="1"/>
</dbReference>
<dbReference type="SUPFAM" id="SSF54211">
    <property type="entry name" value="Ribosomal protein S5 domain 2-like"/>
    <property type="match status" value="1"/>
</dbReference>
<dbReference type="PROSITE" id="PS00298">
    <property type="entry name" value="HSP90"/>
    <property type="match status" value="1"/>
</dbReference>
<sequence>MSHTETHAFQTEVNQLLKLMIHALYSNKEIFLRELVSNASDALDKLRFESVSNDALSEGESELAIQVGFDKEARTVSIIDNGIGMTRDEVIANIGTIANSGTKKFLENMTGDQAKDSHLIGQFGVGFYASFIVADKVTLTTRKAGDDKSEGTRWESAGEGEYTLETVEKETKGTEITLHLKEDMDEFLDDFRLKSIITTYSDHINFPIKMWQVKLDEEGKETEEKSLEQVNKATAIWTQPKSELSDEDYNNFYQTISHDYENPLAHIHNKVEGTLEYTSLLYLPKKAPFDLYDRDRRYGLKLYVKRVFIMDDAEHLMPTYLRFVRGVIDSNDLPLNVSREILQSNRVVDKIRSASVKRVLDQLAKMAKAEDQSDYETFWDQFGNVMKEGVIEDFANKDKIAKLLRFSSTHESSGPTQRVSLQDYIDRMGEGQEAIYYITADTYAAATGSPHLEMFRKKGIEVLLLTDRIDEWLVSHLTEFEGKQLKSVTSADLKEFDEEADKELSEEDKKAREALTEKVKKAIEDQVSDVKITHRLTDSPACVVSAEGDISAHMARMMEQMGQAMPKQKPVLELNPDHALVKKLDSLEDEPKVKEWSLFLLEQAQLAEGDQLEKPADFIKRMNALLSEVI</sequence>
<protein>
    <recommendedName>
        <fullName evidence="1">Chaperone protein HtpG</fullName>
    </recommendedName>
    <alternativeName>
        <fullName evidence="1">Heat shock protein HtpG</fullName>
    </alternativeName>
    <alternativeName>
        <fullName evidence="1">High temperature protein G</fullName>
    </alternativeName>
</protein>
<feature type="chain" id="PRO_0000237004" description="Chaperone protein HtpG">
    <location>
        <begin position="1"/>
        <end position="630"/>
    </location>
</feature>
<feature type="region of interest" description="A; substrate-binding" evidence="1">
    <location>
        <begin position="1"/>
        <end position="339"/>
    </location>
</feature>
<feature type="region of interest" description="B" evidence="1">
    <location>
        <begin position="340"/>
        <end position="556"/>
    </location>
</feature>
<feature type="region of interest" description="C" evidence="1">
    <location>
        <begin position="557"/>
        <end position="630"/>
    </location>
</feature>
<comment type="function">
    <text evidence="1">Molecular chaperone. Has ATPase activity.</text>
</comment>
<comment type="subunit">
    <text evidence="1">Homodimer.</text>
</comment>
<comment type="subcellular location">
    <subcellularLocation>
        <location evidence="1">Cytoplasm</location>
    </subcellularLocation>
</comment>
<comment type="similarity">
    <text evidence="1">Belongs to the heat shock protein 90 family.</text>
</comment>
<accession>Q31F72</accession>
<proteinExistence type="inferred from homology"/>
<gene>
    <name evidence="1" type="primary">htpG</name>
    <name type="ordered locus">Tcr_1609</name>
</gene>